<gene>
    <name type="primary">RFC4</name>
</gene>
<accession>P35249</accession>
<accession>B4DM41</accession>
<accession>D3DNV2</accession>
<accession>Q6FHX7</accession>
<feature type="chain" id="PRO_0000121757" description="Replication factor C subunit 4">
    <location>
        <begin position="1"/>
        <end position="363"/>
    </location>
</feature>
<feature type="region of interest" description="Disordered" evidence="3">
    <location>
        <begin position="1"/>
        <end position="36"/>
    </location>
</feature>
<feature type="binding site" evidence="2">
    <location>
        <begin position="78"/>
        <end position="85"/>
    </location>
    <ligand>
        <name>ATP</name>
        <dbReference type="ChEBI" id="CHEBI:30616"/>
    </ligand>
</feature>
<feature type="modified residue" description="N-acetylmethionine" evidence="12">
    <location>
        <position position="1"/>
    </location>
</feature>
<feature type="modified residue" description="N6-acetyllysine" evidence="11">
    <location>
        <position position="6"/>
    </location>
</feature>
<feature type="modified residue" description="N6-acetyllysine" evidence="11">
    <location>
        <position position="13"/>
    </location>
</feature>
<feature type="splice variant" id="VSP_055862" description="In isoform 2." evidence="9">
    <original>IPAEKIDGVFAACQSGSFDKLEAVVKDLIDEGHAA</original>
    <variation>RVLDILNFFLVGFFVAFRKFSSNKYWVFSKCQVLH</variation>
    <location>
        <begin position="269"/>
        <end position="303"/>
    </location>
</feature>
<feature type="splice variant" id="VSP_055863" description="In isoform 2." evidence="9">
    <location>
        <begin position="304"/>
        <end position="363"/>
    </location>
</feature>
<feature type="sequence variant" id="VAR_090157" description="In MRMNS; uncertain significance." evidence="6">
    <location>
        <position position="275"/>
    </location>
</feature>
<feature type="sequence variant" id="VAR_090158" description="In MRMNS; uncertain significance; decreased interaction with RFC1; decreased interaction with RFC5; decreased interaction with ATAD5; decreased interaction with CTF18." evidence="6">
    <original>C</original>
    <variation>R</variation>
    <location>
        <position position="281"/>
    </location>
</feature>
<feature type="sequence variant" id="VAR_014307" description="In dbSNP:rs2066497." evidence="8">
    <original>V</original>
    <variation>A</variation>
    <location>
        <position position="292"/>
    </location>
</feature>
<feature type="sequence variant" id="VAR_090159" description="In MRMNS; uncertain significance." evidence="6">
    <location>
        <position position="303"/>
    </location>
</feature>
<feature type="sequence variant" id="VAR_090160" description="In MRMNS; uncertain significance; decreased interaction with RFC1; decreased interaction with RFC5; decreased interaction with ATAD5; decreased interaction with CTF18." evidence="6">
    <original>I</original>
    <variation>II</variation>
    <location>
        <position position="327"/>
    </location>
</feature>
<feature type="sequence variant" id="VAR_090161" description="In MRMNS; uncertain significance; decreased interaction with RFC1; decreased interaction with RFC5; decreased interaction with ATAD5; decreased interaction with CTF18." evidence="6">
    <original>E</original>
    <variation>K</variation>
    <location>
        <position position="344"/>
    </location>
</feature>
<feature type="sequence variant" id="VAR_036121" description="In a breast cancer sample; somatic mutation." evidence="5">
    <original>T</original>
    <variation>S</variation>
    <location>
        <position position="354"/>
    </location>
</feature>
<feature type="helix" evidence="17">
    <location>
        <begin position="40"/>
        <end position="43"/>
    </location>
</feature>
<feature type="helix" evidence="17">
    <location>
        <begin position="49"/>
        <end position="51"/>
    </location>
</feature>
<feature type="strand" evidence="16">
    <location>
        <begin position="52"/>
        <end position="54"/>
    </location>
</feature>
<feature type="helix" evidence="17">
    <location>
        <begin position="56"/>
        <end position="67"/>
    </location>
</feature>
<feature type="strand" evidence="17">
    <location>
        <begin position="74"/>
        <end position="77"/>
    </location>
</feature>
<feature type="strand" evidence="13">
    <location>
        <begin position="79"/>
        <end position="83"/>
    </location>
</feature>
<feature type="helix" evidence="17">
    <location>
        <begin position="84"/>
        <end position="95"/>
    </location>
</feature>
<feature type="turn" evidence="17">
    <location>
        <begin position="97"/>
        <end position="99"/>
    </location>
</feature>
<feature type="helix" evidence="17">
    <location>
        <begin position="101"/>
        <end position="104"/>
    </location>
</feature>
<feature type="strand" evidence="17">
    <location>
        <begin position="105"/>
        <end position="108"/>
    </location>
</feature>
<feature type="turn" evidence="16">
    <location>
        <begin position="110"/>
        <end position="112"/>
    </location>
</feature>
<feature type="turn" evidence="14">
    <location>
        <begin position="113"/>
        <end position="115"/>
    </location>
</feature>
<feature type="helix" evidence="17">
    <location>
        <begin position="116"/>
        <end position="127"/>
    </location>
</feature>
<feature type="strand" evidence="17">
    <location>
        <begin position="143"/>
        <end position="149"/>
    </location>
</feature>
<feature type="helix" evidence="15">
    <location>
        <begin position="152"/>
        <end position="154"/>
    </location>
</feature>
<feature type="helix" evidence="17">
    <location>
        <begin position="157"/>
        <end position="161"/>
    </location>
</feature>
<feature type="helix" evidence="17">
    <location>
        <begin position="164"/>
        <end position="169"/>
    </location>
</feature>
<feature type="helix" evidence="17">
    <location>
        <begin position="170"/>
        <end position="172"/>
    </location>
</feature>
<feature type="strand" evidence="17">
    <location>
        <begin position="174"/>
        <end position="179"/>
    </location>
</feature>
<feature type="helix" evidence="17">
    <location>
        <begin position="183"/>
        <end position="185"/>
    </location>
</feature>
<feature type="helix" evidence="17">
    <location>
        <begin position="188"/>
        <end position="193"/>
    </location>
</feature>
<feature type="strand" evidence="17">
    <location>
        <begin position="194"/>
        <end position="198"/>
    </location>
</feature>
<feature type="helix" evidence="17">
    <location>
        <begin position="204"/>
        <end position="217"/>
    </location>
</feature>
<feature type="helix" evidence="17">
    <location>
        <begin position="224"/>
        <end position="234"/>
    </location>
</feature>
<feature type="helix" evidence="17">
    <location>
        <begin position="238"/>
        <end position="252"/>
    </location>
</feature>
<feature type="strand" evidence="18">
    <location>
        <begin position="254"/>
        <end position="257"/>
    </location>
</feature>
<feature type="helix" evidence="17">
    <location>
        <begin position="259"/>
        <end position="265"/>
    </location>
</feature>
<feature type="helix" evidence="17">
    <location>
        <begin position="271"/>
        <end position="283"/>
    </location>
</feature>
<feature type="helix" evidence="17">
    <location>
        <begin position="286"/>
        <end position="298"/>
    </location>
</feature>
<feature type="helix" evidence="17">
    <location>
        <begin position="303"/>
        <end position="314"/>
    </location>
</feature>
<feature type="helix" evidence="17">
    <location>
        <begin position="321"/>
        <end position="339"/>
    </location>
</feature>
<feature type="helix" evidence="17">
    <location>
        <begin position="344"/>
        <end position="361"/>
    </location>
</feature>
<sequence length="363" mass="39682">MQAFLKGTSISTKPPLTKDRGVAASAGSSGENKKAKPVPWVEKYRPKCVDEVAFQEEVVAVLKKSLEGADLPNLLFYGPPGTGKTSTILAAARELFGPELFRLRVLELNASDERGIQVVREKVKNFAQLTVSGSRSDGKPCPPFKIVILDEADSMTSAAQAALRRTMEKESKTTRFCLICNYVSRIIEPLTSRCSKFRFKPLSDKIQQQRLLDIAKKENVKISDEGIAYLVKVSEGDLRKAITFLQSATRLTGGKEITEKVITDIAGVIPAEKIDGVFAACQSGSFDKLEAVVKDLIDEGHAATQLVNQLHDVVVENNLSDKQKSIITEKLAEVDKCLADGADEHLQLISLCATVMQQLSQNC</sequence>
<comment type="function">
    <text evidence="6 7">Subunit of the replication factor C (RFC) complex which acts during elongation of primed DNA templates by DNA polymerases delta and epsilon, and is necessary for ATP-dependent loading of proliferating cell nuclear antigen (PCNA) onto primed DNA. The RFC4 subunit probably functions as a scaffold on which the other complex components can assemble.</text>
</comment>
<comment type="subunit">
    <text evidence="1 4 6">Subunit of the RFC complex, an heteropentameric complex consisting of a large subunit RFC1 and four small subunits RFC2, RFC3, RFC4 and RFC5; the RFC complex interacts with PCNA (PubMed:8999859, PubMed:9488738, PubMed:39106866). Forms an heterotetrameric complex with RFC2, RFC3 and RFC5; this complex has ATPase activity but is not stimulated by PCNA (PubMed:9488738). The heterotetramer of subunits RFC2, RFC3, RFC4 and RFC5 interacts with RAD17 (PubMed:11572977). Interacts with ATAD5(PubMed:39106866). Interacts with CTF18 (PubMed:39106866). Interacts with CNTD1; this interaction facilitates crossover formation (By similarity).</text>
</comment>
<comment type="interaction">
    <interactant intactId="EBI-476655">
        <id>P35249</id>
    </interactant>
    <interactant intactId="EBI-476409">
        <id>P35250</id>
        <label>RFC2</label>
    </interactant>
    <organismsDiffer>false</organismsDiffer>
    <experiments>11</experiments>
</comment>
<comment type="interaction">
    <interactant intactId="EBI-476655">
        <id>P35249</id>
    </interactant>
    <interactant intactId="EBI-1055010">
        <id>P40938</id>
        <label>RFC3</label>
    </interactant>
    <organismsDiffer>false</organismsDiffer>
    <experiments>14</experiments>
</comment>
<comment type="interaction">
    <interactant intactId="EBI-476655">
        <id>P35249</id>
    </interactant>
    <interactant intactId="EBI-712376">
        <id>P40937</id>
        <label>RFC5</label>
    </interactant>
    <organismsDiffer>false</organismsDiffer>
    <experiments>25</experiments>
</comment>
<comment type="interaction">
    <interactant intactId="EBI-476655">
        <id>P35249</id>
    </interactant>
    <interactant intactId="EBI-2130266">
        <id>Q9H4P4</id>
        <label>RNF41</label>
    </interactant>
    <organismsDiffer>false</organismsDiffer>
    <experiments>7</experiments>
</comment>
<comment type="subcellular location">
    <subcellularLocation>
        <location evidence="10">Nucleus</location>
    </subcellularLocation>
</comment>
<comment type="alternative products">
    <event type="alternative splicing"/>
    <isoform>
        <id>P35249-1</id>
        <name>1</name>
        <sequence type="displayed"/>
    </isoform>
    <isoform>
        <id>P35249-2</id>
        <name>2</name>
        <sequence type="described" ref="VSP_055862 VSP_055863"/>
    </isoform>
</comment>
<comment type="disease" evidence="6">
    <disease id="DI-06973">
        <name>Morimoto-Ryu-Malicdan neuromuscular syndrome</name>
        <acronym>MRMNS</acronym>
        <description>An autosomal recessive neuromuscular disorder characterized by delayed gross motor development, gait disturbances, incoordination, muscle weakness, hearing impairment, and decreased body weight. Some patients are wheelchair bound and death in infancy or childhood may occur.</description>
        <dbReference type="MIM" id="621010"/>
    </disease>
    <text>The disease is caused by variants affecting the gene represented in this entry.</text>
</comment>
<comment type="miscellaneous">
    <text>Despite of the presence of a putative ATP-binding motif, this protein does not bind ATP.</text>
</comment>
<comment type="similarity">
    <text evidence="10">Belongs to the activator 1 small subunits family.</text>
</comment>
<keyword id="KW-0002">3D-structure</keyword>
<keyword id="KW-0007">Acetylation</keyword>
<keyword id="KW-0025">Alternative splicing</keyword>
<keyword id="KW-0067">ATP-binding</keyword>
<keyword id="KW-0209">Deafness</keyword>
<keyword id="KW-0903">Direct protein sequencing</keyword>
<keyword id="KW-0235">DNA replication</keyword>
<keyword id="KW-0547">Nucleotide-binding</keyword>
<keyword id="KW-0539">Nucleus</keyword>
<keyword id="KW-1267">Proteomics identification</keyword>
<keyword id="KW-1185">Reference proteome</keyword>
<reference key="1">
    <citation type="journal article" date="1992" name="Proc. Natl. Acad. Sci. U.S.A.">
        <title>Studies of the cloned 37-kDa subunit of activator 1 (replication factor C) of HeLa cells.</title>
        <authorList>
            <person name="Chen M."/>
            <person name="Pan Z.-Q."/>
            <person name="Hurwitz J."/>
        </authorList>
    </citation>
    <scope>NUCLEOTIDE SEQUENCE [MRNA] (ISOFORM 1)</scope>
    <scope>PARTIAL PROTEIN SEQUENCE</scope>
</reference>
<reference key="2">
    <citation type="submission" date="1994-12" db="EMBL/GenBank/DDBJ databases">
        <authorList>
            <person name="Hurwitz J."/>
        </authorList>
    </citation>
    <scope>SEQUENCE REVISION</scope>
</reference>
<reference key="3">
    <citation type="submission" date="2003-05" db="EMBL/GenBank/DDBJ databases">
        <title>Cloning of human full-length CDSs in BD Creator(TM) system donor vector.</title>
        <authorList>
            <person name="Kalnine N."/>
            <person name="Chen X."/>
            <person name="Rolfs A."/>
            <person name="Halleck A."/>
            <person name="Hines L."/>
            <person name="Eisenstein S."/>
            <person name="Koundinya M."/>
            <person name="Raphael J."/>
            <person name="Moreira D."/>
            <person name="Kelley T."/>
            <person name="LaBaer J."/>
            <person name="Lin Y."/>
            <person name="Phelan M."/>
            <person name="Farmer A."/>
        </authorList>
    </citation>
    <scope>NUCLEOTIDE SEQUENCE [LARGE SCALE MRNA] (ISOFORM 1)</scope>
</reference>
<reference key="4">
    <citation type="journal article" date="2004" name="Nat. Genet.">
        <title>Complete sequencing and characterization of 21,243 full-length human cDNAs.</title>
        <authorList>
            <person name="Ota T."/>
            <person name="Suzuki Y."/>
            <person name="Nishikawa T."/>
            <person name="Otsuki T."/>
            <person name="Sugiyama T."/>
            <person name="Irie R."/>
            <person name="Wakamatsu A."/>
            <person name="Hayashi K."/>
            <person name="Sato H."/>
            <person name="Nagai K."/>
            <person name="Kimura K."/>
            <person name="Makita H."/>
            <person name="Sekine M."/>
            <person name="Obayashi M."/>
            <person name="Nishi T."/>
            <person name="Shibahara T."/>
            <person name="Tanaka T."/>
            <person name="Ishii S."/>
            <person name="Yamamoto J."/>
            <person name="Saito K."/>
            <person name="Kawai Y."/>
            <person name="Isono Y."/>
            <person name="Nakamura Y."/>
            <person name="Nagahari K."/>
            <person name="Murakami K."/>
            <person name="Yasuda T."/>
            <person name="Iwayanagi T."/>
            <person name="Wagatsuma M."/>
            <person name="Shiratori A."/>
            <person name="Sudo H."/>
            <person name="Hosoiri T."/>
            <person name="Kaku Y."/>
            <person name="Kodaira H."/>
            <person name="Kondo H."/>
            <person name="Sugawara M."/>
            <person name="Takahashi M."/>
            <person name="Kanda K."/>
            <person name="Yokoi T."/>
            <person name="Furuya T."/>
            <person name="Kikkawa E."/>
            <person name="Omura Y."/>
            <person name="Abe K."/>
            <person name="Kamihara K."/>
            <person name="Katsuta N."/>
            <person name="Sato K."/>
            <person name="Tanikawa M."/>
            <person name="Yamazaki M."/>
            <person name="Ninomiya K."/>
            <person name="Ishibashi T."/>
            <person name="Yamashita H."/>
            <person name="Murakawa K."/>
            <person name="Fujimori K."/>
            <person name="Tanai H."/>
            <person name="Kimata M."/>
            <person name="Watanabe M."/>
            <person name="Hiraoka S."/>
            <person name="Chiba Y."/>
            <person name="Ishida S."/>
            <person name="Ono Y."/>
            <person name="Takiguchi S."/>
            <person name="Watanabe S."/>
            <person name="Yosida M."/>
            <person name="Hotuta T."/>
            <person name="Kusano J."/>
            <person name="Kanehori K."/>
            <person name="Takahashi-Fujii A."/>
            <person name="Hara H."/>
            <person name="Tanase T.-O."/>
            <person name="Nomura Y."/>
            <person name="Togiya S."/>
            <person name="Komai F."/>
            <person name="Hara R."/>
            <person name="Takeuchi K."/>
            <person name="Arita M."/>
            <person name="Imose N."/>
            <person name="Musashino K."/>
            <person name="Yuuki H."/>
            <person name="Oshima A."/>
            <person name="Sasaki N."/>
            <person name="Aotsuka S."/>
            <person name="Yoshikawa Y."/>
            <person name="Matsunawa H."/>
            <person name="Ichihara T."/>
            <person name="Shiohata N."/>
            <person name="Sano S."/>
            <person name="Moriya S."/>
            <person name="Momiyama H."/>
            <person name="Satoh N."/>
            <person name="Takami S."/>
            <person name="Terashima Y."/>
            <person name="Suzuki O."/>
            <person name="Nakagawa S."/>
            <person name="Senoh A."/>
            <person name="Mizoguchi H."/>
            <person name="Goto Y."/>
            <person name="Shimizu F."/>
            <person name="Wakebe H."/>
            <person name="Hishigaki H."/>
            <person name="Watanabe T."/>
            <person name="Sugiyama A."/>
            <person name="Takemoto M."/>
            <person name="Kawakami B."/>
            <person name="Yamazaki M."/>
            <person name="Watanabe K."/>
            <person name="Kumagai A."/>
            <person name="Itakura S."/>
            <person name="Fukuzumi Y."/>
            <person name="Fujimori Y."/>
            <person name="Komiyama M."/>
            <person name="Tashiro H."/>
            <person name="Tanigami A."/>
            <person name="Fujiwara T."/>
            <person name="Ono T."/>
            <person name="Yamada K."/>
            <person name="Fujii Y."/>
            <person name="Ozaki K."/>
            <person name="Hirao M."/>
            <person name="Ohmori Y."/>
            <person name="Kawabata A."/>
            <person name="Hikiji T."/>
            <person name="Kobatake N."/>
            <person name="Inagaki H."/>
            <person name="Ikema Y."/>
            <person name="Okamoto S."/>
            <person name="Okitani R."/>
            <person name="Kawakami T."/>
            <person name="Noguchi S."/>
            <person name="Itoh T."/>
            <person name="Shigeta K."/>
            <person name="Senba T."/>
            <person name="Matsumura K."/>
            <person name="Nakajima Y."/>
            <person name="Mizuno T."/>
            <person name="Morinaga M."/>
            <person name="Sasaki M."/>
            <person name="Togashi T."/>
            <person name="Oyama M."/>
            <person name="Hata H."/>
            <person name="Watanabe M."/>
            <person name="Komatsu T."/>
            <person name="Mizushima-Sugano J."/>
            <person name="Satoh T."/>
            <person name="Shirai Y."/>
            <person name="Takahashi Y."/>
            <person name="Nakagawa K."/>
            <person name="Okumura K."/>
            <person name="Nagase T."/>
            <person name="Nomura N."/>
            <person name="Kikuchi H."/>
            <person name="Masuho Y."/>
            <person name="Yamashita R."/>
            <person name="Nakai K."/>
            <person name="Yada T."/>
            <person name="Nakamura Y."/>
            <person name="Ohara O."/>
            <person name="Isogai T."/>
            <person name="Sugano S."/>
        </authorList>
    </citation>
    <scope>NUCLEOTIDE SEQUENCE [LARGE SCALE MRNA] (ISOFORM 2)</scope>
    <source>
        <tissue>Brain</tissue>
    </source>
</reference>
<reference key="5">
    <citation type="submission" date="2004-06" db="EMBL/GenBank/DDBJ databases">
        <title>Cloning of human full open reading frames in Gateway(TM) system entry vector (pDONR201).</title>
        <authorList>
            <person name="Halleck A."/>
            <person name="Ebert L."/>
            <person name="Mkoundinya M."/>
            <person name="Schick M."/>
            <person name="Eisenstein S."/>
            <person name="Neubert P."/>
            <person name="Kstrang K."/>
            <person name="Schatten R."/>
            <person name="Shen B."/>
            <person name="Henze S."/>
            <person name="Mar W."/>
            <person name="Korn B."/>
            <person name="Zuo D."/>
            <person name="Hu Y."/>
            <person name="LaBaer J."/>
        </authorList>
    </citation>
    <scope>NUCLEOTIDE SEQUENCE [LARGE SCALE MRNA] (ISOFORM 1)</scope>
</reference>
<reference key="6">
    <citation type="submission" date="2002-08" db="EMBL/GenBank/DDBJ databases">
        <authorList>
            <consortium name="NIEHS SNPs program"/>
        </authorList>
    </citation>
    <scope>NUCLEOTIDE SEQUENCE [GENOMIC DNA]</scope>
    <scope>VARIANT ALA-292</scope>
</reference>
<reference key="7">
    <citation type="submission" date="2005-09" db="EMBL/GenBank/DDBJ databases">
        <authorList>
            <person name="Mural R.J."/>
            <person name="Istrail S."/>
            <person name="Sutton G.G."/>
            <person name="Florea L."/>
            <person name="Halpern A.L."/>
            <person name="Mobarry C.M."/>
            <person name="Lippert R."/>
            <person name="Walenz B."/>
            <person name="Shatkay H."/>
            <person name="Dew I."/>
            <person name="Miller J.R."/>
            <person name="Flanigan M.J."/>
            <person name="Edwards N.J."/>
            <person name="Bolanos R."/>
            <person name="Fasulo D."/>
            <person name="Halldorsson B.V."/>
            <person name="Hannenhalli S."/>
            <person name="Turner R."/>
            <person name="Yooseph S."/>
            <person name="Lu F."/>
            <person name="Nusskern D.R."/>
            <person name="Shue B.C."/>
            <person name="Zheng X.H."/>
            <person name="Zhong F."/>
            <person name="Delcher A.L."/>
            <person name="Huson D.H."/>
            <person name="Kravitz S.A."/>
            <person name="Mouchard L."/>
            <person name="Reinert K."/>
            <person name="Remington K.A."/>
            <person name="Clark A.G."/>
            <person name="Waterman M.S."/>
            <person name="Eichler E.E."/>
            <person name="Adams M.D."/>
            <person name="Hunkapiller M.W."/>
            <person name="Myers E.W."/>
            <person name="Venter J.C."/>
        </authorList>
    </citation>
    <scope>NUCLEOTIDE SEQUENCE [LARGE SCALE GENOMIC DNA]</scope>
</reference>
<reference key="8">
    <citation type="journal article" date="2004" name="Genome Res.">
        <title>The status, quality, and expansion of the NIH full-length cDNA project: the Mammalian Gene Collection (MGC).</title>
        <authorList>
            <consortium name="The MGC Project Team"/>
        </authorList>
    </citation>
    <scope>NUCLEOTIDE SEQUENCE [LARGE SCALE MRNA] (ISOFORM 1)</scope>
    <source>
        <tissue>Lung</tissue>
        <tissue>Testis</tissue>
    </source>
</reference>
<reference key="9">
    <citation type="journal article" date="1997" name="J. Biol. Chem.">
        <title>Replication factor C interacts with the C-terminal side of proliferating cell nuclear antigen.</title>
        <authorList>
            <person name="Mossi R."/>
            <person name="Jonsson Z.O."/>
            <person name="Allen B.L."/>
            <person name="Hardin S.H."/>
            <person name="Huebscher U."/>
        </authorList>
    </citation>
    <scope>SUBUNIT</scope>
</reference>
<reference key="10">
    <citation type="journal article" date="1998" name="J. Biol. Chem.">
        <title>Reconstitution of recombinant human replication factor C (RFC) and identification of an RFC subcomplex possessing DNA-dependent ATPase activity.</title>
        <authorList>
            <person name="Ellison V."/>
            <person name="Stillman B."/>
        </authorList>
    </citation>
    <scope>FUNCTION</scope>
    <scope>SUBUNIT</scope>
</reference>
<reference key="11">
    <citation type="journal article" date="2001" name="Proc. Natl. Acad. Sci. U.S.A.">
        <title>Purification and characterization of human DNA damage checkpoint Rad complexes.</title>
        <authorList>
            <person name="Lindsey-Boltz L.A."/>
            <person name="Bermudez V.P."/>
            <person name="Hurwitz J."/>
            <person name="Sancar A."/>
        </authorList>
    </citation>
    <scope>INTERACTION WITH RAD17</scope>
</reference>
<reference key="12">
    <citation type="journal article" date="2009" name="Science">
        <title>Lysine acetylation targets protein complexes and co-regulates major cellular functions.</title>
        <authorList>
            <person name="Choudhary C."/>
            <person name="Kumar C."/>
            <person name="Gnad F."/>
            <person name="Nielsen M.L."/>
            <person name="Rehman M."/>
            <person name="Walther T.C."/>
            <person name="Olsen J.V."/>
            <person name="Mann M."/>
        </authorList>
    </citation>
    <scope>ACETYLATION [LARGE SCALE ANALYSIS] AT LYS-6 AND LYS-13</scope>
    <scope>IDENTIFICATION BY MASS SPECTROMETRY [LARGE SCALE ANALYSIS]</scope>
</reference>
<reference key="13">
    <citation type="journal article" date="2011" name="BMC Syst. Biol.">
        <title>Initial characterization of the human central proteome.</title>
        <authorList>
            <person name="Burkard T.R."/>
            <person name="Planyavsky M."/>
            <person name="Kaupe I."/>
            <person name="Breitwieser F.P."/>
            <person name="Buerckstuemmer T."/>
            <person name="Bennett K.L."/>
            <person name="Superti-Furga G."/>
            <person name="Colinge J."/>
        </authorList>
    </citation>
    <scope>IDENTIFICATION BY MASS SPECTROMETRY [LARGE SCALE ANALYSIS]</scope>
</reference>
<reference key="14">
    <citation type="journal article" date="2012" name="Proc. Natl. Acad. Sci. U.S.A.">
        <title>N-terminal acetylome analyses and functional insights of the N-terminal acetyltransferase NatB.</title>
        <authorList>
            <person name="Van Damme P."/>
            <person name="Lasa M."/>
            <person name="Polevoda B."/>
            <person name="Gazquez C."/>
            <person name="Elosegui-Artola A."/>
            <person name="Kim D.S."/>
            <person name="De Juan-Pardo E."/>
            <person name="Demeyer K."/>
            <person name="Hole K."/>
            <person name="Larrea E."/>
            <person name="Timmerman E."/>
            <person name="Prieto J."/>
            <person name="Arnesen T."/>
            <person name="Sherman F."/>
            <person name="Gevaert K."/>
            <person name="Aldabe R."/>
        </authorList>
    </citation>
    <scope>ACETYLATION [LARGE SCALE ANALYSIS] AT MET-1</scope>
    <scope>IDENTIFICATION BY MASS SPECTROMETRY [LARGE SCALE ANALYSIS]</scope>
</reference>
<reference key="15">
    <citation type="journal article" date="2013" name="J. Proteome Res.">
        <title>Toward a comprehensive characterization of a human cancer cell phosphoproteome.</title>
        <authorList>
            <person name="Zhou H."/>
            <person name="Di Palma S."/>
            <person name="Preisinger C."/>
            <person name="Peng M."/>
            <person name="Polat A.N."/>
            <person name="Heck A.J."/>
            <person name="Mohammed S."/>
        </authorList>
    </citation>
    <scope>IDENTIFICATION BY MASS SPECTROMETRY [LARGE SCALE ANALYSIS]</scope>
    <source>
        <tissue>Cervix carcinoma</tissue>
        <tissue>Erythroleukemia</tissue>
    </source>
</reference>
<reference key="16">
    <citation type="journal article" date="2015" name="Proteomics">
        <title>N-terminome analysis of the human mitochondrial proteome.</title>
        <authorList>
            <person name="Vaca Jacome A.S."/>
            <person name="Rabilloud T."/>
            <person name="Schaeffer-Reiss C."/>
            <person name="Rompais M."/>
            <person name="Ayoub D."/>
            <person name="Lane L."/>
            <person name="Bairoch A."/>
            <person name="Van Dorsselaer A."/>
            <person name="Carapito C."/>
        </authorList>
    </citation>
    <scope>IDENTIFICATION BY MASS SPECTROMETRY [LARGE SCALE ANALYSIS]</scope>
</reference>
<reference key="17">
    <citation type="journal article" date="2006" name="Science">
        <title>The consensus coding sequences of human breast and colorectal cancers.</title>
        <authorList>
            <person name="Sjoeblom T."/>
            <person name="Jones S."/>
            <person name="Wood L.D."/>
            <person name="Parsons D.W."/>
            <person name="Lin J."/>
            <person name="Barber T.D."/>
            <person name="Mandelker D."/>
            <person name="Leary R.J."/>
            <person name="Ptak J."/>
            <person name="Silliman N."/>
            <person name="Szabo S."/>
            <person name="Buckhaults P."/>
            <person name="Farrell C."/>
            <person name="Meeh P."/>
            <person name="Markowitz S.D."/>
            <person name="Willis J."/>
            <person name="Dawson D."/>
            <person name="Willson J.K.V."/>
            <person name="Gazdar A.F."/>
            <person name="Hartigan J."/>
            <person name="Wu L."/>
            <person name="Liu C."/>
            <person name="Parmigiani G."/>
            <person name="Park B.H."/>
            <person name="Bachman K.E."/>
            <person name="Papadopoulos N."/>
            <person name="Vogelstein B."/>
            <person name="Kinzler K.W."/>
            <person name="Velculescu V.E."/>
        </authorList>
    </citation>
    <scope>VARIANT [LARGE SCALE ANALYSIS] SER-354</scope>
</reference>
<reference key="18">
    <citation type="journal article" date="2024" name="Am. J. Hum. Genet.">
        <title>Expanding the genetic and phenotypic landscape of replication factor C complex-related disorders: RFC4 deficiency is linked to a multisystemic disorder.</title>
        <authorList>
            <consortium name="University of Washington Center for Rare Disease Research"/>
            <consortium name="Undiagnosed Diseases Network"/>
            <person name="Morimoto M."/>
            <person name="Ryu E."/>
            <person name="Steger B.J."/>
            <person name="Dixit A."/>
            <person name="Saito Y."/>
            <person name="Yoo J."/>
            <person name="van der Ven A.T."/>
            <person name="Hauser N."/>
            <person name="Steinbach P.J."/>
            <person name="Oura K."/>
            <person name="Huang A.Y."/>
            <person name="Kortuem F."/>
            <person name="Ninomiya S."/>
            <person name="Rosenthal E.A."/>
            <person name="Robinson H.K."/>
            <person name="Guegan K."/>
            <person name="Denecke J."/>
            <person name="Subramony S.H."/>
            <person name="Diamonstein C.J."/>
            <person name="Ping J."/>
            <person name="Fenner M."/>
            <person name="Balton E.V."/>
            <person name="Strohbehn S."/>
            <person name="Allworth A."/>
            <person name="Bamshad M.J."/>
            <person name="Gandhi M."/>
            <person name="Dipple K.M."/>
            <person name="Blue E.E."/>
            <person name="Jarvik G.P."/>
            <person name="Lau C.C."/>
            <person name="Holm I.A."/>
            <person name="Weisz-Hubshman M."/>
            <person name="Solomon B.D."/>
            <person name="Nelson S.F."/>
            <person name="Nishino I."/>
            <person name="Adams D.R."/>
            <person name="Kang S."/>
            <person name="Gahl W.A."/>
            <person name="Toro C."/>
            <person name="Myung K."/>
            <person name="Malicdan M.C.V."/>
        </authorList>
    </citation>
    <scope>VARIANTS MRMNS ASP-275 DEL; ARG-281; ALA-303 DEL; ILE-327 INS AND LYS-344</scope>
    <scope>INVOLVEMENT IN MRMNS</scope>
    <scope>FUNCTION</scope>
    <scope>INTERACTION WITH ATAD5 AND CTF18</scope>
    <scope>CHARACTERIZATION OF VARIANTS MRMNS ARG-281; ILE-327 INS AND LYS-344</scope>
</reference>
<protein>
    <recommendedName>
        <fullName>Replication factor C subunit 4</fullName>
    </recommendedName>
    <alternativeName>
        <fullName>Activator 1 37 kDa subunit</fullName>
        <shortName>A1 37 kDa subunit</shortName>
    </alternativeName>
    <alternativeName>
        <fullName>Activator 1 subunit 4</fullName>
    </alternativeName>
    <alternativeName>
        <fullName>Replication factor C 37 kDa subunit</fullName>
        <shortName>RF-C 37 kDa subunit</shortName>
        <shortName>RFC37</shortName>
    </alternativeName>
</protein>
<organism>
    <name type="scientific">Homo sapiens</name>
    <name type="common">Human</name>
    <dbReference type="NCBI Taxonomy" id="9606"/>
    <lineage>
        <taxon>Eukaryota</taxon>
        <taxon>Metazoa</taxon>
        <taxon>Chordata</taxon>
        <taxon>Craniata</taxon>
        <taxon>Vertebrata</taxon>
        <taxon>Euteleostomi</taxon>
        <taxon>Mammalia</taxon>
        <taxon>Eutheria</taxon>
        <taxon>Euarchontoglires</taxon>
        <taxon>Primates</taxon>
        <taxon>Haplorrhini</taxon>
        <taxon>Catarrhini</taxon>
        <taxon>Hominidae</taxon>
        <taxon>Homo</taxon>
    </lineage>
</organism>
<proteinExistence type="evidence at protein level"/>
<dbReference type="EMBL" id="M87339">
    <property type="protein sequence ID" value="AAB09785.1"/>
    <property type="molecule type" value="mRNA"/>
</dbReference>
<dbReference type="EMBL" id="AF538718">
    <property type="protein sequence ID" value="AAM97933.1"/>
    <property type="molecule type" value="Genomic_DNA"/>
</dbReference>
<dbReference type="EMBL" id="BT006987">
    <property type="protein sequence ID" value="AAP35633.1"/>
    <property type="molecule type" value="mRNA"/>
</dbReference>
<dbReference type="EMBL" id="AK297282">
    <property type="protein sequence ID" value="BAG59753.1"/>
    <property type="molecule type" value="mRNA"/>
</dbReference>
<dbReference type="EMBL" id="CR536561">
    <property type="protein sequence ID" value="CAG38798.1"/>
    <property type="molecule type" value="mRNA"/>
</dbReference>
<dbReference type="EMBL" id="CH471052">
    <property type="protein sequence ID" value="EAW78169.1"/>
    <property type="molecule type" value="Genomic_DNA"/>
</dbReference>
<dbReference type="EMBL" id="CH471052">
    <property type="protein sequence ID" value="EAW78170.1"/>
    <property type="molecule type" value="Genomic_DNA"/>
</dbReference>
<dbReference type="EMBL" id="CH471052">
    <property type="protein sequence ID" value="EAW78171.1"/>
    <property type="molecule type" value="Genomic_DNA"/>
</dbReference>
<dbReference type="EMBL" id="BC017452">
    <property type="protein sequence ID" value="AAH17452.1"/>
    <property type="molecule type" value="mRNA"/>
</dbReference>
<dbReference type="EMBL" id="BC024022">
    <property type="protein sequence ID" value="AAH24022.1"/>
    <property type="molecule type" value="mRNA"/>
</dbReference>
<dbReference type="CCDS" id="CCDS3283.1">
    <molecule id="P35249-1"/>
</dbReference>
<dbReference type="PIR" id="A45253">
    <property type="entry name" value="A45253"/>
</dbReference>
<dbReference type="RefSeq" id="NP_002907.1">
    <molecule id="P35249-1"/>
    <property type="nucleotide sequence ID" value="NM_002916.5"/>
</dbReference>
<dbReference type="RefSeq" id="NP_853551.1">
    <molecule id="P35249-1"/>
    <property type="nucleotide sequence ID" value="NM_181573.3"/>
</dbReference>
<dbReference type="PDB" id="6VVO">
    <property type="method" value="EM"/>
    <property type="resolution" value="3.40 A"/>
    <property type="chains" value="D=1-363"/>
</dbReference>
<dbReference type="PDB" id="7Z6H">
    <property type="method" value="EM"/>
    <property type="resolution" value="3.59 A"/>
    <property type="chains" value="D=1-363"/>
</dbReference>
<dbReference type="PDB" id="8UI7">
    <property type="method" value="EM"/>
    <property type="resolution" value="4.20 A"/>
    <property type="chains" value="D=1-363"/>
</dbReference>
<dbReference type="PDB" id="8UI8">
    <property type="method" value="EM"/>
    <property type="resolution" value="3.10 A"/>
    <property type="chains" value="D=1-363"/>
</dbReference>
<dbReference type="PDB" id="8UI9">
    <property type="method" value="EM"/>
    <property type="resolution" value="3.50 A"/>
    <property type="chains" value="D=1-363"/>
</dbReference>
<dbReference type="PDB" id="8UII">
    <property type="method" value="EM"/>
    <property type="resolution" value="3.04 A"/>
    <property type="chains" value="D=1-363"/>
</dbReference>
<dbReference type="PDB" id="8UMT">
    <property type="method" value="EM"/>
    <property type="resolution" value="3.33 A"/>
    <property type="chains" value="D=1-363"/>
</dbReference>
<dbReference type="PDB" id="8UMU">
    <property type="method" value="EM"/>
    <property type="resolution" value="3.16 A"/>
    <property type="chains" value="D=1-363"/>
</dbReference>
<dbReference type="PDB" id="8UMV">
    <property type="method" value="EM"/>
    <property type="resolution" value="2.75 A"/>
    <property type="chains" value="D=1-363"/>
</dbReference>
<dbReference type="PDB" id="8UMW">
    <property type="method" value="EM"/>
    <property type="resolution" value="2.93 A"/>
    <property type="chains" value="D=1-363"/>
</dbReference>
<dbReference type="PDB" id="8UMY">
    <property type="method" value="EM"/>
    <property type="resolution" value="2.83 A"/>
    <property type="chains" value="D=1-363"/>
</dbReference>
<dbReference type="PDB" id="8UN0">
    <property type="method" value="EM"/>
    <property type="resolution" value="3.00 A"/>
    <property type="chains" value="D=1-363"/>
</dbReference>
<dbReference type="PDB" id="8UNJ">
    <property type="method" value="EM"/>
    <property type="resolution" value="3.35 A"/>
    <property type="chains" value="D=1-363"/>
</dbReference>
<dbReference type="PDBsum" id="6VVO"/>
<dbReference type="PDBsum" id="7Z6H"/>
<dbReference type="PDBsum" id="8UI7"/>
<dbReference type="PDBsum" id="8UI8"/>
<dbReference type="PDBsum" id="8UI9"/>
<dbReference type="PDBsum" id="8UII"/>
<dbReference type="PDBsum" id="8UMT"/>
<dbReference type="PDBsum" id="8UMU"/>
<dbReference type="PDBsum" id="8UMV"/>
<dbReference type="PDBsum" id="8UMW"/>
<dbReference type="PDBsum" id="8UMY"/>
<dbReference type="PDBsum" id="8UN0"/>
<dbReference type="PDBsum" id="8UNJ"/>
<dbReference type="EMDB" id="EMD-14527"/>
<dbReference type="EMDB" id="EMD-21405"/>
<dbReference type="EMDB" id="EMD-42287"/>
<dbReference type="EMDB" id="EMD-42288"/>
<dbReference type="EMDB" id="EMD-42289"/>
<dbReference type="EMDB" id="EMD-42295"/>
<dbReference type="EMDB" id="EMD-42383"/>
<dbReference type="EMDB" id="EMD-42384"/>
<dbReference type="EMDB" id="EMD-42385"/>
<dbReference type="EMDB" id="EMD-42386"/>
<dbReference type="EMDB" id="EMD-42388"/>
<dbReference type="EMDB" id="EMD-42389"/>
<dbReference type="EMDB" id="EMD-42406"/>
<dbReference type="SMR" id="P35249"/>
<dbReference type="BioGRID" id="111916">
    <property type="interactions" value="233"/>
</dbReference>
<dbReference type="ComplexPortal" id="CPX-415">
    <property type="entry name" value="DNA replication factor C complex"/>
</dbReference>
<dbReference type="ComplexPortal" id="CPX-7931">
    <property type="entry name" value="DNA replication factor C complex, RAD17 variant"/>
</dbReference>
<dbReference type="CORUM" id="P35249"/>
<dbReference type="DIP" id="DIP-24267N"/>
<dbReference type="FunCoup" id="P35249">
    <property type="interactions" value="2257"/>
</dbReference>
<dbReference type="IntAct" id="P35249">
    <property type="interactions" value="96"/>
</dbReference>
<dbReference type="MINT" id="P35249"/>
<dbReference type="STRING" id="9606.ENSP00000376272"/>
<dbReference type="GlyCosmos" id="P35249">
    <property type="glycosylation" value="1 site, 1 glycan"/>
</dbReference>
<dbReference type="GlyGen" id="P35249">
    <property type="glycosylation" value="1 site, 1 O-linked glycan (1 site)"/>
</dbReference>
<dbReference type="iPTMnet" id="P35249"/>
<dbReference type="PhosphoSitePlus" id="P35249"/>
<dbReference type="SwissPalm" id="P35249"/>
<dbReference type="BioMuta" id="RFC4"/>
<dbReference type="DMDM" id="1703052"/>
<dbReference type="jPOST" id="P35249"/>
<dbReference type="MassIVE" id="P35249"/>
<dbReference type="PaxDb" id="9606-ENSP00000376272"/>
<dbReference type="PeptideAtlas" id="P35249"/>
<dbReference type="ProteomicsDB" id="55013">
    <molecule id="P35249-1"/>
</dbReference>
<dbReference type="Pumba" id="P35249"/>
<dbReference type="Antibodypedia" id="3877">
    <property type="antibodies" value="295 antibodies from 34 providers"/>
</dbReference>
<dbReference type="DNASU" id="5984"/>
<dbReference type="Ensembl" id="ENST00000296273.7">
    <molecule id="P35249-1"/>
    <property type="protein sequence ID" value="ENSP00000296273.2"/>
    <property type="gene ID" value="ENSG00000163918.12"/>
</dbReference>
<dbReference type="Ensembl" id="ENST00000392481.6">
    <molecule id="P35249-1"/>
    <property type="protein sequence ID" value="ENSP00000376272.2"/>
    <property type="gene ID" value="ENSG00000163918.12"/>
</dbReference>
<dbReference type="GeneID" id="5984"/>
<dbReference type="KEGG" id="hsa:5984"/>
<dbReference type="MANE-Select" id="ENST00000296273.7">
    <property type="protein sequence ID" value="ENSP00000296273.2"/>
    <property type="RefSeq nucleotide sequence ID" value="NM_002916.5"/>
    <property type="RefSeq protein sequence ID" value="NP_002907.1"/>
</dbReference>
<dbReference type="UCSC" id="uc003fqz.4">
    <molecule id="P35249-1"/>
    <property type="organism name" value="human"/>
</dbReference>
<dbReference type="AGR" id="HGNC:9972"/>
<dbReference type="CTD" id="5984"/>
<dbReference type="DisGeNET" id="5984"/>
<dbReference type="GeneCards" id="RFC4"/>
<dbReference type="HGNC" id="HGNC:9972">
    <property type="gene designation" value="RFC4"/>
</dbReference>
<dbReference type="HPA" id="ENSG00000163918">
    <property type="expression patterns" value="Low tissue specificity"/>
</dbReference>
<dbReference type="MalaCards" id="RFC4"/>
<dbReference type="MIM" id="102577">
    <property type="type" value="gene"/>
</dbReference>
<dbReference type="MIM" id="621010">
    <property type="type" value="phenotype"/>
</dbReference>
<dbReference type="neXtProt" id="NX_P35249"/>
<dbReference type="OpenTargets" id="ENSG00000163918"/>
<dbReference type="PharmGKB" id="PA34341"/>
<dbReference type="VEuPathDB" id="HostDB:ENSG00000163918"/>
<dbReference type="eggNOG" id="KOG0989">
    <property type="taxonomic scope" value="Eukaryota"/>
</dbReference>
<dbReference type="GeneTree" id="ENSGT00550000074917"/>
<dbReference type="InParanoid" id="P35249"/>
<dbReference type="OMA" id="GCQSGSF"/>
<dbReference type="OrthoDB" id="10249205at2759"/>
<dbReference type="PAN-GO" id="P35249">
    <property type="GO annotations" value="5 GO annotations based on evolutionary models"/>
</dbReference>
<dbReference type="PhylomeDB" id="P35249"/>
<dbReference type="TreeFam" id="TF314424"/>
<dbReference type="BRENDA" id="3.6.4.B8">
    <property type="organism ID" value="2681"/>
</dbReference>
<dbReference type="PathwayCommons" id="P35249"/>
<dbReference type="Reactome" id="R-HSA-110312">
    <property type="pathway name" value="Translesion synthesis by REV1"/>
</dbReference>
<dbReference type="Reactome" id="R-HSA-110314">
    <property type="pathway name" value="Recognition of DNA damage by PCNA-containing replication complex"/>
</dbReference>
<dbReference type="Reactome" id="R-HSA-110320">
    <property type="pathway name" value="Translesion Synthesis by POLH"/>
</dbReference>
<dbReference type="Reactome" id="R-HSA-174411">
    <property type="pathway name" value="Polymerase switching on the C-strand of the telomere"/>
</dbReference>
<dbReference type="Reactome" id="R-HSA-176187">
    <property type="pathway name" value="Activation of ATR in response to replication stress"/>
</dbReference>
<dbReference type="Reactome" id="R-HSA-5651801">
    <property type="pathway name" value="PCNA-Dependent Long Patch Base Excision Repair"/>
</dbReference>
<dbReference type="Reactome" id="R-HSA-5655862">
    <property type="pathway name" value="Translesion synthesis by POLK"/>
</dbReference>
<dbReference type="Reactome" id="R-HSA-5656121">
    <property type="pathway name" value="Translesion synthesis by POLI"/>
</dbReference>
<dbReference type="Reactome" id="R-HSA-5656169">
    <property type="pathway name" value="Termination of translesion DNA synthesis"/>
</dbReference>
<dbReference type="Reactome" id="R-HSA-5685938">
    <property type="pathway name" value="HDR through Single Strand Annealing (SSA)"/>
</dbReference>
<dbReference type="Reactome" id="R-HSA-5685942">
    <property type="pathway name" value="HDR through Homologous Recombination (HRR)"/>
</dbReference>
<dbReference type="Reactome" id="R-HSA-5693607">
    <property type="pathway name" value="Processing of DNA double-strand break ends"/>
</dbReference>
<dbReference type="Reactome" id="R-HSA-5693616">
    <property type="pathway name" value="Presynaptic phase of homologous DNA pairing and strand exchange"/>
</dbReference>
<dbReference type="Reactome" id="R-HSA-5696397">
    <property type="pathway name" value="Gap-filling DNA repair synthesis and ligation in GG-NER"/>
</dbReference>
<dbReference type="Reactome" id="R-HSA-5696400">
    <property type="pathway name" value="Dual Incision in GG-NER"/>
</dbReference>
<dbReference type="Reactome" id="R-HSA-6782135">
    <property type="pathway name" value="Dual incision in TC-NER"/>
</dbReference>
<dbReference type="Reactome" id="R-HSA-6782210">
    <property type="pathway name" value="Gap-filling DNA repair synthesis and ligation in TC-NER"/>
</dbReference>
<dbReference type="Reactome" id="R-HSA-6804756">
    <property type="pathway name" value="Regulation of TP53 Activity through Phosphorylation"/>
</dbReference>
<dbReference type="Reactome" id="R-HSA-69091">
    <property type="pathway name" value="Polymerase switching"/>
</dbReference>
<dbReference type="Reactome" id="R-HSA-69473">
    <property type="pathway name" value="G2/M DNA damage checkpoint"/>
</dbReference>
<dbReference type="Reactome" id="R-HSA-9709570">
    <property type="pathway name" value="Impaired BRCA2 binding to RAD51"/>
</dbReference>
<dbReference type="SignaLink" id="P35249"/>
<dbReference type="SIGNOR" id="P35249"/>
<dbReference type="BioGRID-ORCS" id="5984">
    <property type="hits" value="713 hits in 1166 CRISPR screens"/>
</dbReference>
<dbReference type="CD-CODE" id="91857CE7">
    <property type="entry name" value="Nucleolus"/>
</dbReference>
<dbReference type="CD-CODE" id="DEE660B4">
    <property type="entry name" value="Stress granule"/>
</dbReference>
<dbReference type="ChiTaRS" id="RFC4">
    <property type="organism name" value="human"/>
</dbReference>
<dbReference type="GeneWiki" id="RFC4"/>
<dbReference type="GenomeRNAi" id="5984"/>
<dbReference type="Pharos" id="P35249">
    <property type="development level" value="Tbio"/>
</dbReference>
<dbReference type="PRO" id="PR:P35249"/>
<dbReference type="Proteomes" id="UP000005640">
    <property type="component" value="Chromosome 3"/>
</dbReference>
<dbReference type="RNAct" id="P35249">
    <property type="molecule type" value="protein"/>
</dbReference>
<dbReference type="Bgee" id="ENSG00000163918">
    <property type="expression patterns" value="Expressed in ventricular zone and 190 other cell types or tissues"/>
</dbReference>
<dbReference type="ExpressionAtlas" id="P35249">
    <property type="expression patterns" value="baseline and differential"/>
</dbReference>
<dbReference type="GO" id="GO:0031390">
    <property type="term" value="C:Ctf18 RFC-like complex"/>
    <property type="evidence" value="ECO:0000314"/>
    <property type="project" value="UniProtKB"/>
</dbReference>
<dbReference type="GO" id="GO:0005663">
    <property type="term" value="C:DNA replication factor C complex"/>
    <property type="evidence" value="ECO:0000314"/>
    <property type="project" value="UniProtKB"/>
</dbReference>
<dbReference type="GO" id="GO:0031391">
    <property type="term" value="C:Elg1 RFC-like complex"/>
    <property type="evidence" value="ECO:0000314"/>
    <property type="project" value="UniProtKB"/>
</dbReference>
<dbReference type="GO" id="GO:0005654">
    <property type="term" value="C:nucleoplasm"/>
    <property type="evidence" value="ECO:0000314"/>
    <property type="project" value="HPA"/>
</dbReference>
<dbReference type="GO" id="GO:0005634">
    <property type="term" value="C:nucleus"/>
    <property type="evidence" value="ECO:0000318"/>
    <property type="project" value="GO_Central"/>
</dbReference>
<dbReference type="GO" id="GO:0005524">
    <property type="term" value="F:ATP binding"/>
    <property type="evidence" value="ECO:0007669"/>
    <property type="project" value="UniProtKB-KW"/>
</dbReference>
<dbReference type="GO" id="GO:0016887">
    <property type="term" value="F:ATP hydrolysis activity"/>
    <property type="evidence" value="ECO:0007669"/>
    <property type="project" value="InterPro"/>
</dbReference>
<dbReference type="GO" id="GO:0003677">
    <property type="term" value="F:DNA binding"/>
    <property type="evidence" value="ECO:0007669"/>
    <property type="project" value="InterPro"/>
</dbReference>
<dbReference type="GO" id="GO:0019899">
    <property type="term" value="F:enzyme binding"/>
    <property type="evidence" value="ECO:0007669"/>
    <property type="project" value="Ensembl"/>
</dbReference>
<dbReference type="GO" id="GO:0006281">
    <property type="term" value="P:DNA repair"/>
    <property type="evidence" value="ECO:0000318"/>
    <property type="project" value="GO_Central"/>
</dbReference>
<dbReference type="GO" id="GO:0006271">
    <property type="term" value="P:DNA strand elongation involved in DNA replication"/>
    <property type="evidence" value="ECO:0000304"/>
    <property type="project" value="ProtInc"/>
</dbReference>
<dbReference type="GO" id="GO:0006261">
    <property type="term" value="P:DNA-templated DNA replication"/>
    <property type="evidence" value="ECO:0000314"/>
    <property type="project" value="ComplexPortal"/>
</dbReference>
<dbReference type="GO" id="GO:1900264">
    <property type="term" value="P:positive regulation of DNA-directed DNA polymerase activity"/>
    <property type="evidence" value="ECO:0000314"/>
    <property type="project" value="UniProtKB"/>
</dbReference>
<dbReference type="CDD" id="cd00009">
    <property type="entry name" value="AAA"/>
    <property type="match status" value="1"/>
</dbReference>
<dbReference type="CDD" id="cd18140">
    <property type="entry name" value="HLD_clamp_RFC"/>
    <property type="match status" value="1"/>
</dbReference>
<dbReference type="FunFam" id="1.10.8.60:FF:000144">
    <property type="entry name" value="Replication factor C subunit 4"/>
    <property type="match status" value="1"/>
</dbReference>
<dbReference type="FunFam" id="1.20.272.10:FF:000010">
    <property type="entry name" value="Replication factor C subunit 4"/>
    <property type="match status" value="1"/>
</dbReference>
<dbReference type="FunFam" id="3.40.50.300:FF:000237">
    <property type="entry name" value="replication factor C subunit 4"/>
    <property type="match status" value="1"/>
</dbReference>
<dbReference type="Gene3D" id="1.10.8.60">
    <property type="match status" value="1"/>
</dbReference>
<dbReference type="Gene3D" id="1.20.272.10">
    <property type="match status" value="1"/>
</dbReference>
<dbReference type="Gene3D" id="3.40.50.300">
    <property type="entry name" value="P-loop containing nucleotide triphosphate hydrolases"/>
    <property type="match status" value="1"/>
</dbReference>
<dbReference type="InterPro" id="IPR003593">
    <property type="entry name" value="AAA+_ATPase"/>
</dbReference>
<dbReference type="InterPro" id="IPR003959">
    <property type="entry name" value="ATPase_AAA_core"/>
</dbReference>
<dbReference type="InterPro" id="IPR008921">
    <property type="entry name" value="DNA_pol3_clamp-load_cplx_C"/>
</dbReference>
<dbReference type="InterPro" id="IPR050238">
    <property type="entry name" value="DNA_Rep/Repair_Clamp_Loader"/>
</dbReference>
<dbReference type="InterPro" id="IPR027417">
    <property type="entry name" value="P-loop_NTPase"/>
</dbReference>
<dbReference type="InterPro" id="IPR013748">
    <property type="entry name" value="Rep_factorC_C"/>
</dbReference>
<dbReference type="InterPro" id="IPR047854">
    <property type="entry name" value="RFC_lid"/>
</dbReference>
<dbReference type="NCBIfam" id="NF001679">
    <property type="entry name" value="PRK00440.1"/>
    <property type="match status" value="1"/>
</dbReference>
<dbReference type="PANTHER" id="PTHR11669">
    <property type="entry name" value="REPLICATION FACTOR C / DNA POLYMERASE III GAMMA-TAU SUBUNIT"/>
    <property type="match status" value="1"/>
</dbReference>
<dbReference type="PANTHER" id="PTHR11669:SF20">
    <property type="entry name" value="REPLICATION FACTOR C SUBUNIT 4"/>
    <property type="match status" value="1"/>
</dbReference>
<dbReference type="Pfam" id="PF00004">
    <property type="entry name" value="AAA"/>
    <property type="match status" value="1"/>
</dbReference>
<dbReference type="Pfam" id="PF21960">
    <property type="entry name" value="RCF1-5-like_lid"/>
    <property type="match status" value="1"/>
</dbReference>
<dbReference type="Pfam" id="PF08542">
    <property type="entry name" value="Rep_fac_C"/>
    <property type="match status" value="1"/>
</dbReference>
<dbReference type="SMART" id="SM00382">
    <property type="entry name" value="AAA"/>
    <property type="match status" value="1"/>
</dbReference>
<dbReference type="SUPFAM" id="SSF52540">
    <property type="entry name" value="P-loop containing nucleoside triphosphate hydrolases"/>
    <property type="match status" value="1"/>
</dbReference>
<dbReference type="SUPFAM" id="SSF48019">
    <property type="entry name" value="post-AAA+ oligomerization domain-like"/>
    <property type="match status" value="1"/>
</dbReference>
<name>RFC4_HUMAN</name>
<evidence type="ECO:0000250" key="1">
    <source>
        <dbReference type="UniProtKB" id="Q99J62"/>
    </source>
</evidence>
<evidence type="ECO:0000255" key="2"/>
<evidence type="ECO:0000256" key="3">
    <source>
        <dbReference type="SAM" id="MobiDB-lite"/>
    </source>
</evidence>
<evidence type="ECO:0000269" key="4">
    <source>
    </source>
</evidence>
<evidence type="ECO:0000269" key="5">
    <source>
    </source>
</evidence>
<evidence type="ECO:0000269" key="6">
    <source>
    </source>
</evidence>
<evidence type="ECO:0000269" key="7">
    <source>
    </source>
</evidence>
<evidence type="ECO:0000269" key="8">
    <source ref="6"/>
</evidence>
<evidence type="ECO:0000303" key="9">
    <source>
    </source>
</evidence>
<evidence type="ECO:0000305" key="10"/>
<evidence type="ECO:0007744" key="11">
    <source>
    </source>
</evidence>
<evidence type="ECO:0007744" key="12">
    <source>
    </source>
</evidence>
<evidence type="ECO:0007829" key="13">
    <source>
        <dbReference type="PDB" id="6VVO"/>
    </source>
</evidence>
<evidence type="ECO:0007829" key="14">
    <source>
        <dbReference type="PDB" id="8UI9"/>
    </source>
</evidence>
<evidence type="ECO:0007829" key="15">
    <source>
        <dbReference type="PDB" id="8UII"/>
    </source>
</evidence>
<evidence type="ECO:0007829" key="16">
    <source>
        <dbReference type="PDB" id="8UMU"/>
    </source>
</evidence>
<evidence type="ECO:0007829" key="17">
    <source>
        <dbReference type="PDB" id="8UMY"/>
    </source>
</evidence>
<evidence type="ECO:0007829" key="18">
    <source>
        <dbReference type="PDB" id="8UN0"/>
    </source>
</evidence>